<reference key="1">
    <citation type="journal article" date="1996" name="Nucleic Acids Res.">
        <title>Complete sequence analysis of the genome of the bacterium Mycoplasma pneumoniae.</title>
        <authorList>
            <person name="Himmelreich R."/>
            <person name="Hilbert H."/>
            <person name="Plagens H."/>
            <person name="Pirkl E."/>
            <person name="Li B.-C."/>
            <person name="Herrmann R."/>
        </authorList>
    </citation>
    <scope>NUCLEOTIDE SEQUENCE [LARGE SCALE GENOMIC DNA]</scope>
    <source>
        <strain>ATCC 29342 / M129 / Subtype 1</strain>
    </source>
</reference>
<organism>
    <name type="scientific">Mycoplasma pneumoniae (strain ATCC 29342 / M129 / Subtype 1)</name>
    <name type="common">Mycoplasmoides pneumoniae</name>
    <dbReference type="NCBI Taxonomy" id="272634"/>
    <lineage>
        <taxon>Bacteria</taxon>
        <taxon>Bacillati</taxon>
        <taxon>Mycoplasmatota</taxon>
        <taxon>Mycoplasmoidales</taxon>
        <taxon>Mycoplasmoidaceae</taxon>
        <taxon>Mycoplasmoides</taxon>
    </lineage>
</organism>
<keyword id="KW-0328">Glycosyltransferase</keyword>
<keyword id="KW-1185">Reference proteome</keyword>
<keyword id="KW-0808">Transferase</keyword>
<sequence length="299" mass="35079">MKISVIISTYNCGALIVKALCSLVSNQTPACELEVLVIDDGSIDNTRQIIKKFQAKVSFTLKYFYKKNGNWGSVINYVKENRLANGDWITVLDSDDTLKPNTLNKLANLVEKADYDLVVFDYTKCWKKIKLKIHTYPTWWKNMTRELQKQTPFCIPLGKFLKRNLFYKLPKLKEKVSFQDALYTASSLKLAKKVRHVNQSGGNYHFKRAGNSMSIPWNIKRFSAELDICKDLIRLNAQEIALVHLLRQQFRVQLKEKQIQLAVTRDFNFSGFSWYTRCFLWMVYQTMLKRYFYLQTTKQ</sequence>
<comment type="similarity">
    <text evidence="1">Belongs to the glycosyltransferase 2 family.</text>
</comment>
<protein>
    <recommendedName>
        <fullName>Uncharacterized glycosyltransferase MG060 homolog</fullName>
        <ecNumber>2.4.-.-</ecNumber>
    </recommendedName>
</protein>
<accession>P75042</accession>
<dbReference type="EC" id="2.4.-.-"/>
<dbReference type="EMBL" id="U00089">
    <property type="protein sequence ID" value="AAB95728.1"/>
    <property type="molecule type" value="Genomic_DNA"/>
</dbReference>
<dbReference type="PIR" id="S73406">
    <property type="entry name" value="S73406"/>
</dbReference>
<dbReference type="RefSeq" id="NP_109763.1">
    <property type="nucleotide sequence ID" value="NC_000912.1"/>
</dbReference>
<dbReference type="RefSeq" id="WP_010874432.1">
    <property type="nucleotide sequence ID" value="NZ_OU342337.1"/>
</dbReference>
<dbReference type="SMR" id="P75042"/>
<dbReference type="STRING" id="272634.MPN_075"/>
<dbReference type="CAZy" id="GT2">
    <property type="family name" value="Glycosyltransferase Family 2"/>
</dbReference>
<dbReference type="EnsemblBacteria" id="AAB95728">
    <property type="protein sequence ID" value="AAB95728"/>
    <property type="gene ID" value="MPN_075"/>
</dbReference>
<dbReference type="KEGG" id="mpn:MPN_075"/>
<dbReference type="PATRIC" id="fig|272634.6.peg.76"/>
<dbReference type="HOGENOM" id="CLU_079042_0_0_14"/>
<dbReference type="OrthoDB" id="396512at2"/>
<dbReference type="BioCyc" id="MPNE272634:G1GJ3-114-MONOMER"/>
<dbReference type="Proteomes" id="UP000000808">
    <property type="component" value="Chromosome"/>
</dbReference>
<dbReference type="GO" id="GO:0016757">
    <property type="term" value="F:glycosyltransferase activity"/>
    <property type="evidence" value="ECO:0007669"/>
    <property type="project" value="UniProtKB-KW"/>
</dbReference>
<dbReference type="CDD" id="cd00761">
    <property type="entry name" value="Glyco_tranf_GTA_type"/>
    <property type="match status" value="1"/>
</dbReference>
<dbReference type="Gene3D" id="3.90.550.10">
    <property type="entry name" value="Spore Coat Polysaccharide Biosynthesis Protein SpsA, Chain A"/>
    <property type="match status" value="1"/>
</dbReference>
<dbReference type="InterPro" id="IPR001173">
    <property type="entry name" value="Glyco_trans_2-like"/>
</dbReference>
<dbReference type="InterPro" id="IPR050834">
    <property type="entry name" value="Glycosyltransf_2"/>
</dbReference>
<dbReference type="InterPro" id="IPR029044">
    <property type="entry name" value="Nucleotide-diphossugar_trans"/>
</dbReference>
<dbReference type="PANTHER" id="PTHR43685">
    <property type="entry name" value="GLYCOSYLTRANSFERASE"/>
    <property type="match status" value="1"/>
</dbReference>
<dbReference type="PANTHER" id="PTHR43685:SF2">
    <property type="entry name" value="GLYCOSYLTRANSFERASE 2-LIKE DOMAIN-CONTAINING PROTEIN"/>
    <property type="match status" value="1"/>
</dbReference>
<dbReference type="Pfam" id="PF00535">
    <property type="entry name" value="Glycos_transf_2"/>
    <property type="match status" value="1"/>
</dbReference>
<dbReference type="SUPFAM" id="SSF53448">
    <property type="entry name" value="Nucleotide-diphospho-sugar transferases"/>
    <property type="match status" value="1"/>
</dbReference>
<evidence type="ECO:0000305" key="1"/>
<gene>
    <name type="ordered locus">MPN_075</name>
    <name type="ORF">D09_orf299</name>
    <name type="ORF">MP080</name>
</gene>
<proteinExistence type="inferred from homology"/>
<feature type="chain" id="PRO_0000059244" description="Uncharacterized glycosyltransferase MG060 homolog">
    <location>
        <begin position="1"/>
        <end position="299"/>
    </location>
</feature>
<name>Y075_MYCPN</name>